<organism>
    <name type="scientific">Canis lupus familiaris</name>
    <name type="common">Dog</name>
    <name type="synonym">Canis familiaris</name>
    <dbReference type="NCBI Taxonomy" id="9615"/>
    <lineage>
        <taxon>Eukaryota</taxon>
        <taxon>Metazoa</taxon>
        <taxon>Chordata</taxon>
        <taxon>Craniata</taxon>
        <taxon>Vertebrata</taxon>
        <taxon>Euteleostomi</taxon>
        <taxon>Mammalia</taxon>
        <taxon>Eutheria</taxon>
        <taxon>Laurasiatheria</taxon>
        <taxon>Carnivora</taxon>
        <taxon>Caniformia</taxon>
        <taxon>Canidae</taxon>
        <taxon>Canis</taxon>
    </lineage>
</organism>
<comment type="function">
    <text evidence="2 3">Acts as a calcium sensor and regulates phototransduction of cone and rod photoreceptor cells (By similarity). Modulates light sensitivity of cone photoreceptor in dark and dim conditions (By similarity). In response to high Ca(2+) levels induced by low light levels, prolongs RHO/rhodopsin activation in rod photoreceptor cells by binding to and inhibiting GRK1-mediated phosphorylation of RHO/rhodopsin (By similarity). Plays a role in scotopic vision/enhances vision in dim light by enhancing signal transfer between rod photoreceptors and rod bipolar cells (By similarity). Improves rod photoreceptor sensitivity in dim light and mediates response of rod photoreceptors to facilitate detection of change and motion in bright light (By similarity).</text>
</comment>
<comment type="subunit">
    <text evidence="2">Homodimer; disulfide-linked (By similarity). Homodimerization is caused by prolonged intense illumination (By similarity). May form a complex composed of RHO, GRK1 and RCVRN in a Ca(2+)-dependent manner; RCVRN prevents the interaction between GRK1 and RHO (By similarity). Interacts (via C-terminus) with GRK1 (via N-terminus); the interaction is Ca(2+)-dependent (By similarity).</text>
</comment>
<comment type="subcellular location">
    <subcellularLocation>
        <location evidence="3">Photoreceptor inner segment</location>
    </subcellularLocation>
    <subcellularLocation>
        <location evidence="3">Cell projection</location>
        <location evidence="3">Cilium</location>
        <location evidence="3">Photoreceptor outer segment</location>
    </subcellularLocation>
    <subcellularLocation>
        <location evidence="2">Photoreceptor outer segment membrane</location>
        <topology evidence="2">Lipid-anchor</topology>
        <orientation evidence="2">Cytoplasmic side</orientation>
    </subcellularLocation>
    <subcellularLocation>
        <location evidence="3">Perikaryon</location>
    </subcellularLocation>
    <text evidence="2 3">Primarily expressed in the inner segments of light-adapted rod photoreceptors, approximately 10% of which translocates from photoreceptor outer segments upon light stimulation (By similarity). Targeting of myristoylated protein to rod photoreceptor outer segments is calcium dependent (By similarity).</text>
</comment>
<comment type="domain">
    <text evidence="2">EF-hand 2 and EF-hand 3 domains are the low-affinity and the high-affinity calcium binding sites, respectively. EF-hand 1 and EF-hand 4 domains do not bind calcium due to substitutions that disrupt their respective Ca(2+) binding loops. The cooperative binding of calcium to the EF-hand 2 domain following EF-hand 3 domain calcium binding requires myristoylation (By similarity). Calcium binding to the 2 EF-hand domains induces exposure of the myristoyl group through a protein conformation change, this process known as the calcium-myristoyl switch facilitates binding to photoreceptor cell membranes (By similarity).</text>
</comment>
<comment type="PTM">
    <text evidence="2">The N-terminal glycine is linked to one of four different types of acyl groups. The most abundant is myristoleate (14:1), but 14:0, 14:2, and 12:0 acyl residues are also present (By similarity). The Ca(2+) induced exposure of the myristoyl group, known as the calcium-myristoyl switch, promotes RCVRN binding to the photoreceptor cell membranes only when intracellular Ca(2+) concentration is high (By similarity).</text>
</comment>
<comment type="PTM">
    <text evidence="2">Oxidation on Cys-39 occurs in response to prolonged intense illumination and results in the formation of disulfide homodimers, and to a lesser extent disulfide-linked heterodimers.</text>
</comment>
<comment type="similarity">
    <text evidence="6">Belongs to the recoverin family.</text>
</comment>
<proteinExistence type="inferred from homology"/>
<gene>
    <name type="primary">RCVRN</name>
    <name type="synonym">RCV1</name>
</gene>
<protein>
    <recommendedName>
        <fullName>Recoverin</fullName>
    </recommendedName>
</protein>
<feature type="initiator methionine" description="Removed" evidence="2">
    <location>
        <position position="1"/>
    </location>
</feature>
<feature type="chain" id="PRO_0000289578" description="Recoverin">
    <location>
        <begin position="2"/>
        <end position="202"/>
    </location>
</feature>
<feature type="domain" description="EF-hand 1" evidence="4">
    <location>
        <begin position="41"/>
        <end position="59"/>
    </location>
</feature>
<feature type="domain" description="EF-hand 2" evidence="4">
    <location>
        <begin position="61"/>
        <end position="96"/>
    </location>
</feature>
<feature type="domain" description="EF-hand 3" evidence="4">
    <location>
        <begin position="97"/>
        <end position="132"/>
    </location>
</feature>
<feature type="domain" description="EF-hand 4" evidence="4">
    <location>
        <begin position="147"/>
        <end position="182"/>
    </location>
</feature>
<feature type="region of interest" description="Interaction with GRK1" evidence="2">
    <location>
        <begin position="189"/>
        <end position="192"/>
    </location>
</feature>
<feature type="binding site" evidence="2 4">
    <location>
        <position position="74"/>
    </location>
    <ligand>
        <name>Ca(2+)</name>
        <dbReference type="ChEBI" id="CHEBI:29108"/>
        <label>1</label>
        <note>low affinity</note>
    </ligand>
</feature>
<feature type="binding site" evidence="2 4">
    <location>
        <position position="76"/>
    </location>
    <ligand>
        <name>Ca(2+)</name>
        <dbReference type="ChEBI" id="CHEBI:29108"/>
        <label>1</label>
        <note>low affinity</note>
    </ligand>
</feature>
<feature type="binding site" evidence="2 4">
    <location>
        <position position="78"/>
    </location>
    <ligand>
        <name>Ca(2+)</name>
        <dbReference type="ChEBI" id="CHEBI:29108"/>
        <label>1</label>
        <note>low affinity</note>
    </ligand>
</feature>
<feature type="binding site" evidence="2 4">
    <location>
        <position position="80"/>
    </location>
    <ligand>
        <name>Ca(2+)</name>
        <dbReference type="ChEBI" id="CHEBI:29108"/>
        <label>1</label>
        <note>low affinity</note>
    </ligand>
</feature>
<feature type="binding site" evidence="2 4">
    <location>
        <position position="85"/>
    </location>
    <ligand>
        <name>Ca(2+)</name>
        <dbReference type="ChEBI" id="CHEBI:29108"/>
        <label>1</label>
        <note>low affinity</note>
    </ligand>
</feature>
<feature type="binding site" evidence="2 4">
    <location>
        <position position="110"/>
    </location>
    <ligand>
        <name>Ca(2+)</name>
        <dbReference type="ChEBI" id="CHEBI:29108"/>
        <label>2</label>
        <note>high affinity</note>
    </ligand>
</feature>
<feature type="binding site" evidence="2 4">
    <location>
        <position position="112"/>
    </location>
    <ligand>
        <name>Ca(2+)</name>
        <dbReference type="ChEBI" id="CHEBI:29108"/>
        <label>2</label>
        <note>high affinity</note>
    </ligand>
</feature>
<feature type="binding site" evidence="2 4">
    <location>
        <position position="114"/>
    </location>
    <ligand>
        <name>Ca(2+)</name>
        <dbReference type="ChEBI" id="CHEBI:29108"/>
        <label>2</label>
        <note>high affinity</note>
    </ligand>
</feature>
<feature type="binding site" evidence="2 4">
    <location>
        <position position="121"/>
    </location>
    <ligand>
        <name>Ca(2+)</name>
        <dbReference type="ChEBI" id="CHEBI:29108"/>
        <label>2</label>
        <note>high affinity</note>
    </ligand>
</feature>
<feature type="site" description="Interaction with GRK1" evidence="2">
    <location>
        <position position="192"/>
    </location>
</feature>
<feature type="modified residue" description="Cysteine sulfenic acid (-SOH)" evidence="2">
    <location>
        <position position="39"/>
    </location>
</feature>
<feature type="lipid moiety-binding region" description="N-myristoyl glycine" evidence="1">
    <location>
        <position position="2"/>
    </location>
</feature>
<feature type="disulfide bond" description="Interchain, redox-active" evidence="2">
    <location>
        <position position="39"/>
    </location>
</feature>
<feature type="sequence variant" evidence="5">
    <original>N</original>
    <variation>K</variation>
    <location>
        <position position="3"/>
    </location>
</feature>
<feature type="sequence variant" evidence="5">
    <original>P</original>
    <variation>H</variation>
    <location>
        <position position="202"/>
    </location>
</feature>
<name>RECO_CANLF</name>
<keyword id="KW-0106">Calcium</keyword>
<keyword id="KW-0966">Cell projection</keyword>
<keyword id="KW-1015">Disulfide bond</keyword>
<keyword id="KW-0449">Lipoprotein</keyword>
<keyword id="KW-0472">Membrane</keyword>
<keyword id="KW-0479">Metal-binding</keyword>
<keyword id="KW-0519">Myristate</keyword>
<keyword id="KW-0558">Oxidation</keyword>
<keyword id="KW-0676">Redox-active center</keyword>
<keyword id="KW-1185">Reference proteome</keyword>
<keyword id="KW-0677">Repeat</keyword>
<keyword id="KW-0716">Sensory transduction</keyword>
<keyword id="KW-0844">Vision</keyword>
<reference key="1">
    <citation type="journal article" date="2002" name="Mol. Vis.">
        <title>The canine recoverin (RCV1) gene: a candidate gene for generalized progressive retinal atrophy.</title>
        <authorList>
            <person name="Dekomien G."/>
            <person name="Epplen J.T."/>
        </authorList>
    </citation>
    <scope>NUCLEOTIDE SEQUENCE [GENOMIC DNA]</scope>
    <scope>VARIANTS LYS-3 AND HIS-202</scope>
</reference>
<sequence length="202" mass="23282">MGNSKSGALSKEILEELQLNTKFTEEELCSWYQSFLKECPSGRITKQEFQSIYSKFFPEADPKAYAQHVFRSFDANSDGTLDFKEYVIALHMTSAGKTNQKLEWAFSLYDVDGNGAISKSEVLEIVMAIFKMISPEDVKQLPEDENTPEKRAEKIWGFFGKKDDDKLTEEEFIEGTLANKEILRLIQFEPRKVKEKLKEKKP</sequence>
<evidence type="ECO:0000250" key="1"/>
<evidence type="ECO:0000250" key="2">
    <source>
        <dbReference type="UniProtKB" id="P21457"/>
    </source>
</evidence>
<evidence type="ECO:0000250" key="3">
    <source>
        <dbReference type="UniProtKB" id="P34057"/>
    </source>
</evidence>
<evidence type="ECO:0000255" key="4">
    <source>
        <dbReference type="PROSITE-ProRule" id="PRU00448"/>
    </source>
</evidence>
<evidence type="ECO:0000269" key="5">
    <source>
    </source>
</evidence>
<evidence type="ECO:0000305" key="6"/>
<dbReference type="EMBL" id="AJ414401">
    <property type="protein sequence ID" value="CAC91741.1"/>
    <property type="molecule type" value="Genomic_DNA"/>
</dbReference>
<dbReference type="RefSeq" id="NP_001014303.1">
    <property type="nucleotide sequence ID" value="NM_001014281.1"/>
</dbReference>
<dbReference type="SMR" id="Q8MIH6"/>
<dbReference type="FunCoup" id="Q8MIH6">
    <property type="interactions" value="1"/>
</dbReference>
<dbReference type="STRING" id="9615.ENSCAFP00000025716"/>
<dbReference type="PaxDb" id="9612-ENSCAFP00000025716"/>
<dbReference type="Ensembl" id="ENSCAFT00030001999.1">
    <property type="protein sequence ID" value="ENSCAFP00030001771.1"/>
    <property type="gene ID" value="ENSCAFG00030001151.1"/>
</dbReference>
<dbReference type="Ensembl" id="ENSCAFT00845003222.1">
    <property type="protein sequence ID" value="ENSCAFP00845002556.1"/>
    <property type="gene ID" value="ENSCAFG00845001836.1"/>
</dbReference>
<dbReference type="GeneID" id="489500"/>
<dbReference type="KEGG" id="cfa:489500"/>
<dbReference type="CTD" id="5957"/>
<dbReference type="VEuPathDB" id="HostDB:ENSCAFG00845001836"/>
<dbReference type="eggNOG" id="KOG0044">
    <property type="taxonomic scope" value="Eukaryota"/>
</dbReference>
<dbReference type="GeneTree" id="ENSGT00940000159441"/>
<dbReference type="InParanoid" id="Q8MIH6"/>
<dbReference type="OrthoDB" id="191686at2759"/>
<dbReference type="Reactome" id="R-CFA-2514859">
    <property type="pathway name" value="Inactivation, recovery and regulation of the phototransduction cascade"/>
</dbReference>
<dbReference type="Proteomes" id="UP000002254">
    <property type="component" value="Unplaced"/>
</dbReference>
<dbReference type="Proteomes" id="UP000694429">
    <property type="component" value="Chromosome 5"/>
</dbReference>
<dbReference type="Proteomes" id="UP000694542">
    <property type="component" value="Unplaced"/>
</dbReference>
<dbReference type="Proteomes" id="UP000805418">
    <property type="component" value="Chromosome 5"/>
</dbReference>
<dbReference type="GO" id="GO:0016020">
    <property type="term" value="C:membrane"/>
    <property type="evidence" value="ECO:0007669"/>
    <property type="project" value="UniProtKB-KW"/>
</dbReference>
<dbReference type="GO" id="GO:0043204">
    <property type="term" value="C:perikaryon"/>
    <property type="evidence" value="ECO:0007669"/>
    <property type="project" value="UniProtKB-SubCell"/>
</dbReference>
<dbReference type="GO" id="GO:0001917">
    <property type="term" value="C:photoreceptor inner segment"/>
    <property type="evidence" value="ECO:0007669"/>
    <property type="project" value="UniProtKB-SubCell"/>
</dbReference>
<dbReference type="GO" id="GO:0001750">
    <property type="term" value="C:photoreceptor outer segment"/>
    <property type="evidence" value="ECO:0007669"/>
    <property type="project" value="UniProtKB-SubCell"/>
</dbReference>
<dbReference type="GO" id="GO:0005509">
    <property type="term" value="F:calcium ion binding"/>
    <property type="evidence" value="ECO:0000318"/>
    <property type="project" value="GO_Central"/>
</dbReference>
<dbReference type="GO" id="GO:0007602">
    <property type="term" value="P:phototransduction"/>
    <property type="evidence" value="ECO:0007669"/>
    <property type="project" value="Ensembl"/>
</dbReference>
<dbReference type="GO" id="GO:0051924">
    <property type="term" value="P:regulation of calcium ion transport"/>
    <property type="evidence" value="ECO:0007669"/>
    <property type="project" value="Ensembl"/>
</dbReference>
<dbReference type="GO" id="GO:0009966">
    <property type="term" value="P:regulation of signal transduction"/>
    <property type="evidence" value="ECO:0000318"/>
    <property type="project" value="GO_Central"/>
</dbReference>
<dbReference type="GO" id="GO:0007601">
    <property type="term" value="P:visual perception"/>
    <property type="evidence" value="ECO:0007669"/>
    <property type="project" value="UniProtKB-KW"/>
</dbReference>
<dbReference type="CDD" id="cd00051">
    <property type="entry name" value="EFh"/>
    <property type="match status" value="1"/>
</dbReference>
<dbReference type="FunFam" id="1.10.238.10:FF:000009">
    <property type="entry name" value="Visinin-like protein 1"/>
    <property type="match status" value="1"/>
</dbReference>
<dbReference type="Gene3D" id="1.10.238.10">
    <property type="entry name" value="EF-hand"/>
    <property type="match status" value="2"/>
</dbReference>
<dbReference type="InterPro" id="IPR011992">
    <property type="entry name" value="EF-hand-dom_pair"/>
</dbReference>
<dbReference type="InterPro" id="IPR018247">
    <property type="entry name" value="EF_Hand_1_Ca_BS"/>
</dbReference>
<dbReference type="InterPro" id="IPR002048">
    <property type="entry name" value="EF_hand_dom"/>
</dbReference>
<dbReference type="InterPro" id="IPR028846">
    <property type="entry name" value="Recoverin"/>
</dbReference>
<dbReference type="PANTHER" id="PTHR23055">
    <property type="entry name" value="CALCIUM BINDING PROTEINS"/>
    <property type="match status" value="1"/>
</dbReference>
<dbReference type="PANTHER" id="PTHR23055:SF20">
    <property type="entry name" value="RECOVERIN"/>
    <property type="match status" value="1"/>
</dbReference>
<dbReference type="Pfam" id="PF13499">
    <property type="entry name" value="EF-hand_7"/>
    <property type="match status" value="1"/>
</dbReference>
<dbReference type="Pfam" id="PF13833">
    <property type="entry name" value="EF-hand_8"/>
    <property type="match status" value="1"/>
</dbReference>
<dbReference type="PRINTS" id="PR00450">
    <property type="entry name" value="RECOVERIN"/>
</dbReference>
<dbReference type="SMART" id="SM00054">
    <property type="entry name" value="EFh"/>
    <property type="match status" value="2"/>
</dbReference>
<dbReference type="SUPFAM" id="SSF47473">
    <property type="entry name" value="EF-hand"/>
    <property type="match status" value="1"/>
</dbReference>
<dbReference type="PROSITE" id="PS00018">
    <property type="entry name" value="EF_HAND_1"/>
    <property type="match status" value="2"/>
</dbReference>
<dbReference type="PROSITE" id="PS50222">
    <property type="entry name" value="EF_HAND_2"/>
    <property type="match status" value="4"/>
</dbReference>
<accession>Q8MIH6</accession>